<name>YQHQ_BACSU</name>
<accession>P54515</accession>
<keyword id="KW-1003">Cell membrane</keyword>
<keyword id="KW-0472">Membrane</keyword>
<keyword id="KW-1185">Reference proteome</keyword>
<keyword id="KW-0812">Transmembrane</keyword>
<keyword id="KW-1133">Transmembrane helix</keyword>
<reference key="1">
    <citation type="journal article" date="1996" name="Microbiology">
        <title>Systematic sequencing of the 283 kb 210 degrees-232 degrees region of the Bacillus subtilis genome containing the skin element and many sporulation genes.</title>
        <authorList>
            <person name="Mizuno M."/>
            <person name="Masuda S."/>
            <person name="Takemaru K."/>
            <person name="Hosono S."/>
            <person name="Sato T."/>
            <person name="Takeuchi M."/>
            <person name="Kobayashi Y."/>
        </authorList>
    </citation>
    <scope>NUCLEOTIDE SEQUENCE [GENOMIC DNA]</scope>
    <source>
        <strain>168 / JH642</strain>
    </source>
</reference>
<reference key="2">
    <citation type="journal article" date="1997" name="Nature">
        <title>The complete genome sequence of the Gram-positive bacterium Bacillus subtilis.</title>
        <authorList>
            <person name="Kunst F."/>
            <person name="Ogasawara N."/>
            <person name="Moszer I."/>
            <person name="Albertini A.M."/>
            <person name="Alloni G."/>
            <person name="Azevedo V."/>
            <person name="Bertero M.G."/>
            <person name="Bessieres P."/>
            <person name="Bolotin A."/>
            <person name="Borchert S."/>
            <person name="Borriss R."/>
            <person name="Boursier L."/>
            <person name="Brans A."/>
            <person name="Braun M."/>
            <person name="Brignell S.C."/>
            <person name="Bron S."/>
            <person name="Brouillet S."/>
            <person name="Bruschi C.V."/>
            <person name="Caldwell B."/>
            <person name="Capuano V."/>
            <person name="Carter N.M."/>
            <person name="Choi S.-K."/>
            <person name="Codani J.-J."/>
            <person name="Connerton I.F."/>
            <person name="Cummings N.J."/>
            <person name="Daniel R.A."/>
            <person name="Denizot F."/>
            <person name="Devine K.M."/>
            <person name="Duesterhoeft A."/>
            <person name="Ehrlich S.D."/>
            <person name="Emmerson P.T."/>
            <person name="Entian K.-D."/>
            <person name="Errington J."/>
            <person name="Fabret C."/>
            <person name="Ferrari E."/>
            <person name="Foulger D."/>
            <person name="Fritz C."/>
            <person name="Fujita M."/>
            <person name="Fujita Y."/>
            <person name="Fuma S."/>
            <person name="Galizzi A."/>
            <person name="Galleron N."/>
            <person name="Ghim S.-Y."/>
            <person name="Glaser P."/>
            <person name="Goffeau A."/>
            <person name="Golightly E.J."/>
            <person name="Grandi G."/>
            <person name="Guiseppi G."/>
            <person name="Guy B.J."/>
            <person name="Haga K."/>
            <person name="Haiech J."/>
            <person name="Harwood C.R."/>
            <person name="Henaut A."/>
            <person name="Hilbert H."/>
            <person name="Holsappel S."/>
            <person name="Hosono S."/>
            <person name="Hullo M.-F."/>
            <person name="Itaya M."/>
            <person name="Jones L.-M."/>
            <person name="Joris B."/>
            <person name="Karamata D."/>
            <person name="Kasahara Y."/>
            <person name="Klaerr-Blanchard M."/>
            <person name="Klein C."/>
            <person name="Kobayashi Y."/>
            <person name="Koetter P."/>
            <person name="Koningstein G."/>
            <person name="Krogh S."/>
            <person name="Kumano M."/>
            <person name="Kurita K."/>
            <person name="Lapidus A."/>
            <person name="Lardinois S."/>
            <person name="Lauber J."/>
            <person name="Lazarevic V."/>
            <person name="Lee S.-M."/>
            <person name="Levine A."/>
            <person name="Liu H."/>
            <person name="Masuda S."/>
            <person name="Mauel C."/>
            <person name="Medigue C."/>
            <person name="Medina N."/>
            <person name="Mellado R.P."/>
            <person name="Mizuno M."/>
            <person name="Moestl D."/>
            <person name="Nakai S."/>
            <person name="Noback M."/>
            <person name="Noone D."/>
            <person name="O'Reilly M."/>
            <person name="Ogawa K."/>
            <person name="Ogiwara A."/>
            <person name="Oudega B."/>
            <person name="Park S.-H."/>
            <person name="Parro V."/>
            <person name="Pohl T.M."/>
            <person name="Portetelle D."/>
            <person name="Porwollik S."/>
            <person name="Prescott A.M."/>
            <person name="Presecan E."/>
            <person name="Pujic P."/>
            <person name="Purnelle B."/>
            <person name="Rapoport G."/>
            <person name="Rey M."/>
            <person name="Reynolds S."/>
            <person name="Rieger M."/>
            <person name="Rivolta C."/>
            <person name="Rocha E."/>
            <person name="Roche B."/>
            <person name="Rose M."/>
            <person name="Sadaie Y."/>
            <person name="Sato T."/>
            <person name="Scanlan E."/>
            <person name="Schleich S."/>
            <person name="Schroeter R."/>
            <person name="Scoffone F."/>
            <person name="Sekiguchi J."/>
            <person name="Sekowska A."/>
            <person name="Seror S.J."/>
            <person name="Serror P."/>
            <person name="Shin B.-S."/>
            <person name="Soldo B."/>
            <person name="Sorokin A."/>
            <person name="Tacconi E."/>
            <person name="Takagi T."/>
            <person name="Takahashi H."/>
            <person name="Takemaru K."/>
            <person name="Takeuchi M."/>
            <person name="Tamakoshi A."/>
            <person name="Tanaka T."/>
            <person name="Terpstra P."/>
            <person name="Tognoni A."/>
            <person name="Tosato V."/>
            <person name="Uchiyama S."/>
            <person name="Vandenbol M."/>
            <person name="Vannier F."/>
            <person name="Vassarotti A."/>
            <person name="Viari A."/>
            <person name="Wambutt R."/>
            <person name="Wedler E."/>
            <person name="Wedler H."/>
            <person name="Weitzenegger T."/>
            <person name="Winters P."/>
            <person name="Wipat A."/>
            <person name="Yamamoto H."/>
            <person name="Yamane K."/>
            <person name="Yasumoto K."/>
            <person name="Yata K."/>
            <person name="Yoshida K."/>
            <person name="Yoshikawa H.-F."/>
            <person name="Zumstein E."/>
            <person name="Yoshikawa H."/>
            <person name="Danchin A."/>
        </authorList>
    </citation>
    <scope>NUCLEOTIDE SEQUENCE [LARGE SCALE GENOMIC DNA]</scope>
    <source>
        <strain>168</strain>
    </source>
</reference>
<reference key="3">
    <citation type="journal article" date="2009" name="Microbiology">
        <title>From a consortium sequence to a unified sequence: the Bacillus subtilis 168 reference genome a decade later.</title>
        <authorList>
            <person name="Barbe V."/>
            <person name="Cruveiller S."/>
            <person name="Kunst F."/>
            <person name="Lenoble P."/>
            <person name="Meurice G."/>
            <person name="Sekowska A."/>
            <person name="Vallenet D."/>
            <person name="Wang T."/>
            <person name="Moszer I."/>
            <person name="Medigue C."/>
            <person name="Danchin A."/>
        </authorList>
    </citation>
    <scope>SEQUENCE REVISION TO 265</scope>
</reference>
<gene>
    <name type="primary">yqhQ</name>
    <name type="ordered locus">BSU24490</name>
</gene>
<proteinExistence type="predicted"/>
<comment type="subcellular location">
    <subcellularLocation>
        <location evidence="2">Cell membrane</location>
        <topology evidence="2">Multi-pass membrane protein</topology>
    </subcellularLocation>
</comment>
<feature type="chain" id="PRO_0000049823" description="Uncharacterized protein YqhQ">
    <location>
        <begin position="1"/>
        <end position="318"/>
    </location>
</feature>
<feature type="transmembrane region" description="Helical" evidence="1">
    <location>
        <begin position="112"/>
        <end position="132"/>
    </location>
</feature>
<feature type="transmembrane region" description="Helical" evidence="1">
    <location>
        <begin position="147"/>
        <end position="167"/>
    </location>
</feature>
<feature type="transmembrane region" description="Helical" evidence="1">
    <location>
        <begin position="209"/>
        <end position="229"/>
    </location>
</feature>
<feature type="transmembrane region" description="Helical" evidence="1">
    <location>
        <begin position="237"/>
        <end position="257"/>
    </location>
</feature>
<feature type="sequence conflict" description="In Ref. 1; BAA12554." evidence="2" ref="1">
    <original>P</original>
    <variation>R</variation>
    <location>
        <position position="265"/>
    </location>
</feature>
<organism>
    <name type="scientific">Bacillus subtilis (strain 168)</name>
    <dbReference type="NCBI Taxonomy" id="224308"/>
    <lineage>
        <taxon>Bacteria</taxon>
        <taxon>Bacillati</taxon>
        <taxon>Bacillota</taxon>
        <taxon>Bacilli</taxon>
        <taxon>Bacillales</taxon>
        <taxon>Bacillaceae</taxon>
        <taxon>Bacillus</taxon>
    </lineage>
</organism>
<evidence type="ECO:0000255" key="1"/>
<evidence type="ECO:0000305" key="2"/>
<protein>
    <recommendedName>
        <fullName>Uncharacterized protein YqhQ</fullName>
    </recommendedName>
</protein>
<dbReference type="EMBL" id="D84432">
    <property type="protein sequence ID" value="BAA12554.1"/>
    <property type="molecule type" value="Genomic_DNA"/>
</dbReference>
<dbReference type="EMBL" id="AL009126">
    <property type="protein sequence ID" value="CAB14380.2"/>
    <property type="molecule type" value="Genomic_DNA"/>
</dbReference>
<dbReference type="PIR" id="H69959">
    <property type="entry name" value="H69959"/>
</dbReference>
<dbReference type="RefSeq" id="NP_390329.2">
    <property type="nucleotide sequence ID" value="NC_000964.3"/>
</dbReference>
<dbReference type="RefSeq" id="WP_009967716.1">
    <property type="nucleotide sequence ID" value="NZ_OZ025638.1"/>
</dbReference>
<dbReference type="FunCoup" id="P54515">
    <property type="interactions" value="18"/>
</dbReference>
<dbReference type="STRING" id="224308.BSU24490"/>
<dbReference type="PaxDb" id="224308-BSU24490"/>
<dbReference type="EnsemblBacteria" id="CAB14380">
    <property type="protein sequence ID" value="CAB14380"/>
    <property type="gene ID" value="BSU_24490"/>
</dbReference>
<dbReference type="GeneID" id="938556"/>
<dbReference type="KEGG" id="bsu:BSU24490"/>
<dbReference type="PATRIC" id="fig|224308.179.peg.2667"/>
<dbReference type="eggNOG" id="COG3872">
    <property type="taxonomic scope" value="Bacteria"/>
</dbReference>
<dbReference type="InParanoid" id="P54515"/>
<dbReference type="OrthoDB" id="9784805at2"/>
<dbReference type="PhylomeDB" id="P54515"/>
<dbReference type="BioCyc" id="BSUB:BSU24490-MONOMER"/>
<dbReference type="Proteomes" id="UP000001570">
    <property type="component" value="Chromosome"/>
</dbReference>
<dbReference type="GO" id="GO:0005886">
    <property type="term" value="C:plasma membrane"/>
    <property type="evidence" value="ECO:0007669"/>
    <property type="project" value="UniProtKB-SubCell"/>
</dbReference>
<dbReference type="InterPro" id="IPR010787">
    <property type="entry name" value="DUF1385"/>
</dbReference>
<dbReference type="PANTHER" id="PTHR42867">
    <property type="entry name" value="MEMBRANE PROTEIN-RELATED"/>
    <property type="match status" value="1"/>
</dbReference>
<dbReference type="PANTHER" id="PTHR42867:SF1">
    <property type="entry name" value="MEMBRANE PROTEIN-RELATED"/>
    <property type="match status" value="1"/>
</dbReference>
<dbReference type="Pfam" id="PF07136">
    <property type="entry name" value="DUF1385"/>
    <property type="match status" value="1"/>
</dbReference>
<sequence>MSKHKVPPAYGGQAVVEGVMFGGKHHYVTAIRRTDGSIDFFKLPRKHNPKLNIVKKIPFLRGIAAIIEASANGTKHLNFSSERYGLDPSEDETLEQEEKKSSGLSMYLSLAVIGVLSFLFSKFVFTLVPVFLAELTRPIFSLNTAQIAIESLFKLILLLGYIYFLSMTPLIKRVFQYHGAEHKVINCYEQNLPITVENVQNQSRLHYRCGSSFILFTIIVGMFVYLLVPTDPLWLRVIDRVALIPVVLGISFEVLQLTNKVRDIPGLKLLGYPGLWLQLLTTKEPKDEQVEVAIESFNELLRLEALSEQNQKPSHNVI</sequence>